<accession>P85242</accession>
<organism>
    <name type="scientific">Viola biflora</name>
    <name type="common">Yellow wood violet</name>
    <dbReference type="NCBI Taxonomy" id="214529"/>
    <lineage>
        <taxon>Eukaryota</taxon>
        <taxon>Viridiplantae</taxon>
        <taxon>Streptophyta</taxon>
        <taxon>Embryophyta</taxon>
        <taxon>Tracheophyta</taxon>
        <taxon>Spermatophyta</taxon>
        <taxon>Magnoliopsida</taxon>
        <taxon>eudicotyledons</taxon>
        <taxon>Gunneridae</taxon>
        <taxon>Pentapetalae</taxon>
        <taxon>rosids</taxon>
        <taxon>fabids</taxon>
        <taxon>Malpighiales</taxon>
        <taxon>Violaceae</taxon>
        <taxon>Viola</taxon>
        <taxon>Viola subgen. Viola</taxon>
        <taxon>Viola sect. Chamaemelanium</taxon>
    </lineage>
</organism>
<dbReference type="SMR" id="P85242"/>
<dbReference type="GO" id="GO:0006952">
    <property type="term" value="P:defense response"/>
    <property type="evidence" value="ECO:0007669"/>
    <property type="project" value="UniProtKB-KW"/>
</dbReference>
<dbReference type="InterPro" id="IPR005535">
    <property type="entry name" value="Cyclotide"/>
</dbReference>
<dbReference type="InterPro" id="IPR036146">
    <property type="entry name" value="Cyclotide_sf"/>
</dbReference>
<dbReference type="Pfam" id="PF03784">
    <property type="entry name" value="Cyclotide"/>
    <property type="match status" value="1"/>
</dbReference>
<dbReference type="SUPFAM" id="SSF57038">
    <property type="entry name" value="Cyclotides"/>
    <property type="match status" value="1"/>
</dbReference>
<dbReference type="PROSITE" id="PS51052">
    <property type="entry name" value="CYCLOTIDE"/>
    <property type="match status" value="1"/>
</dbReference>
<proteinExistence type="evidence at protein level"/>
<protein>
    <recommendedName>
        <fullName>Cyclotide vibi-D</fullName>
    </recommendedName>
</protein>
<name>CYVD_VIOBI</name>
<reference evidence="4" key="1">
    <citation type="journal article" date="2008" name="Phytochemistry">
        <title>The alpine violet, Viola biflora, is a rich source of cyclotides with potent cytotoxicity.</title>
        <authorList>
            <person name="Herrmann A."/>
            <person name="Burman R."/>
            <person name="Mylne J.S."/>
            <person name="Karlsson G."/>
            <person name="Gullbo J."/>
            <person name="Craik D.J."/>
            <person name="Clark R.J."/>
            <person name="Goeransson U."/>
        </authorList>
    </citation>
    <scope>PROTEIN SEQUENCE</scope>
    <scope>FUNCTION</scope>
    <scope>MASS SPECTROMETRY</scope>
</reference>
<evidence type="ECO:0000250" key="1">
    <source>
        <dbReference type="UniProtKB" id="P56254"/>
    </source>
</evidence>
<evidence type="ECO:0000255" key="2">
    <source>
        <dbReference type="PROSITE-ProRule" id="PRU00395"/>
    </source>
</evidence>
<evidence type="ECO:0000269" key="3">
    <source>
    </source>
</evidence>
<evidence type="ECO:0000305" key="4"/>
<feature type="peptide" id="PRO_0000341424" description="Cyclotide vibi-D">
    <location>
        <begin position="1"/>
        <end position="29"/>
    </location>
</feature>
<feature type="disulfide bond" evidence="1 2">
    <location>
        <begin position="5"/>
        <end position="19"/>
    </location>
</feature>
<feature type="disulfide bond" evidence="1 2">
    <location>
        <begin position="9"/>
        <end position="21"/>
    </location>
</feature>
<feature type="disulfide bond" evidence="1 2">
    <location>
        <begin position="14"/>
        <end position="26"/>
    </location>
</feature>
<feature type="cross-link" description="Cyclopeptide (Gly-Asn)" evidence="3">
    <location>
        <begin position="1"/>
        <end position="29"/>
    </location>
</feature>
<keyword id="KW-0903">Direct protein sequencing</keyword>
<keyword id="KW-1015">Disulfide bond</keyword>
<keyword id="KW-0960">Knottin</keyword>
<keyword id="KW-0611">Plant defense</keyword>
<comment type="function">
    <text evidence="2 3 4">Probably participates in a plant defense mechanism. Has moderate levels of cytotoxic activity, active against a human lymphoma cell line with an IC(50) of &gt;30 uM.</text>
</comment>
<comment type="domain">
    <text evidence="1">The presence of a 'disulfide through disulfide knot' structurally defines this protein as a knottin.</text>
</comment>
<comment type="PTM">
    <text evidence="2 3">This is a cyclic peptide.</text>
</comment>
<comment type="mass spectrometry" mass="2985.0" method="Electrospray" evidence="3"/>
<comment type="similarity">
    <text evidence="2">Belongs to the cyclotide family. Moebius subfamily.</text>
</comment>
<comment type="caution">
    <text evidence="4">This peptide is cyclic. The start position was chosen by similarity to OAK1 (kalata-B1) for which the DNA sequence is known.</text>
</comment>
<sequence length="29" mass="3010">GLPVCGETCFGGRCNTPGCTCSYPICTRN</sequence>